<gene>
    <name evidence="1" type="primary">folD</name>
    <name type="ordered locus">EcSMS35_0574</name>
</gene>
<feature type="chain" id="PRO_1000196773" description="Bifunctional protein FolD">
    <location>
        <begin position="1"/>
        <end position="288"/>
    </location>
</feature>
<feature type="binding site" evidence="1">
    <location>
        <begin position="166"/>
        <end position="168"/>
    </location>
    <ligand>
        <name>NADP(+)</name>
        <dbReference type="ChEBI" id="CHEBI:58349"/>
    </ligand>
</feature>
<feature type="binding site" evidence="1">
    <location>
        <position position="232"/>
    </location>
    <ligand>
        <name>NADP(+)</name>
        <dbReference type="ChEBI" id="CHEBI:58349"/>
    </ligand>
</feature>
<accession>B1LKE8</accession>
<comment type="function">
    <text evidence="1">Catalyzes the oxidation of 5,10-methylenetetrahydrofolate to 5,10-methenyltetrahydrofolate and then the hydrolysis of 5,10-methenyltetrahydrofolate to 10-formyltetrahydrofolate.</text>
</comment>
<comment type="catalytic activity">
    <reaction evidence="1">
        <text>(6R)-5,10-methylene-5,6,7,8-tetrahydrofolate + NADP(+) = (6R)-5,10-methenyltetrahydrofolate + NADPH</text>
        <dbReference type="Rhea" id="RHEA:22812"/>
        <dbReference type="ChEBI" id="CHEBI:15636"/>
        <dbReference type="ChEBI" id="CHEBI:57455"/>
        <dbReference type="ChEBI" id="CHEBI:57783"/>
        <dbReference type="ChEBI" id="CHEBI:58349"/>
        <dbReference type="EC" id="1.5.1.5"/>
    </reaction>
</comment>
<comment type="catalytic activity">
    <reaction evidence="1">
        <text>(6R)-5,10-methenyltetrahydrofolate + H2O = (6R)-10-formyltetrahydrofolate + H(+)</text>
        <dbReference type="Rhea" id="RHEA:23700"/>
        <dbReference type="ChEBI" id="CHEBI:15377"/>
        <dbReference type="ChEBI" id="CHEBI:15378"/>
        <dbReference type="ChEBI" id="CHEBI:57455"/>
        <dbReference type="ChEBI" id="CHEBI:195366"/>
        <dbReference type="EC" id="3.5.4.9"/>
    </reaction>
</comment>
<comment type="pathway">
    <text evidence="1">One-carbon metabolism; tetrahydrofolate interconversion.</text>
</comment>
<comment type="subunit">
    <text evidence="1">Homodimer.</text>
</comment>
<comment type="similarity">
    <text evidence="1">Belongs to the tetrahydrofolate dehydrogenase/cyclohydrolase family.</text>
</comment>
<protein>
    <recommendedName>
        <fullName evidence="1">Bifunctional protein FolD</fullName>
    </recommendedName>
    <domain>
        <recommendedName>
            <fullName evidence="1">Methylenetetrahydrofolate dehydrogenase</fullName>
            <ecNumber evidence="1">1.5.1.5</ecNumber>
        </recommendedName>
    </domain>
    <domain>
        <recommendedName>
            <fullName evidence="1">Methenyltetrahydrofolate cyclohydrolase</fullName>
            <ecNumber evidence="1">3.5.4.9</ecNumber>
        </recommendedName>
    </domain>
</protein>
<name>FOLD_ECOSM</name>
<reference key="1">
    <citation type="journal article" date="2008" name="J. Bacteriol.">
        <title>Insights into the environmental resistance gene pool from the genome sequence of the multidrug-resistant environmental isolate Escherichia coli SMS-3-5.</title>
        <authorList>
            <person name="Fricke W.F."/>
            <person name="Wright M.S."/>
            <person name="Lindell A.H."/>
            <person name="Harkins D.M."/>
            <person name="Baker-Austin C."/>
            <person name="Ravel J."/>
            <person name="Stepanauskas R."/>
        </authorList>
    </citation>
    <scope>NUCLEOTIDE SEQUENCE [LARGE SCALE GENOMIC DNA]</scope>
    <source>
        <strain>SMS-3-5 / SECEC</strain>
    </source>
</reference>
<proteinExistence type="inferred from homology"/>
<organism>
    <name type="scientific">Escherichia coli (strain SMS-3-5 / SECEC)</name>
    <dbReference type="NCBI Taxonomy" id="439855"/>
    <lineage>
        <taxon>Bacteria</taxon>
        <taxon>Pseudomonadati</taxon>
        <taxon>Pseudomonadota</taxon>
        <taxon>Gammaproteobacteria</taxon>
        <taxon>Enterobacterales</taxon>
        <taxon>Enterobacteriaceae</taxon>
        <taxon>Escherichia</taxon>
    </lineage>
</organism>
<sequence length="288" mass="30986">MAAKIIDGKTIAQQVRSEVAQKVQARIAAGLRAPGLAVVLVGSNPASQIYVASKRKACEEVGFVSRSYDLPETTSEAELLELIDTLNADNTIDGILVQLPLPAGIDNVKVLERIHPDKDVDGFHPYNVGRLCQRAPRLRPCTPRGIVTLLERYNIDTFGLNAVVIGASNIVGRPMSMELLLAGCTTTVTHRFTKNLRHHVENADLLIVAVGKPGFIPGDWIKEGAIVIDVGINRLENGKVVGDVVFEDAAKRASYITPVPGGVGPMTVATLIENTLQACVEYHDPQGE</sequence>
<evidence type="ECO:0000255" key="1">
    <source>
        <dbReference type="HAMAP-Rule" id="MF_01576"/>
    </source>
</evidence>
<dbReference type="EC" id="1.5.1.5" evidence="1"/>
<dbReference type="EC" id="3.5.4.9" evidence="1"/>
<dbReference type="EMBL" id="CP000970">
    <property type="protein sequence ID" value="ACB18105.1"/>
    <property type="molecule type" value="Genomic_DNA"/>
</dbReference>
<dbReference type="RefSeq" id="WP_000729161.1">
    <property type="nucleotide sequence ID" value="NC_010498.1"/>
</dbReference>
<dbReference type="SMR" id="B1LKE8"/>
<dbReference type="KEGG" id="ecm:EcSMS35_0574"/>
<dbReference type="HOGENOM" id="CLU_034045_2_1_6"/>
<dbReference type="UniPathway" id="UPA00193"/>
<dbReference type="Proteomes" id="UP000007011">
    <property type="component" value="Chromosome"/>
</dbReference>
<dbReference type="GO" id="GO:0005829">
    <property type="term" value="C:cytosol"/>
    <property type="evidence" value="ECO:0007669"/>
    <property type="project" value="TreeGrafter"/>
</dbReference>
<dbReference type="GO" id="GO:0004477">
    <property type="term" value="F:methenyltetrahydrofolate cyclohydrolase activity"/>
    <property type="evidence" value="ECO:0007669"/>
    <property type="project" value="UniProtKB-UniRule"/>
</dbReference>
<dbReference type="GO" id="GO:0004488">
    <property type="term" value="F:methylenetetrahydrofolate dehydrogenase (NADP+) activity"/>
    <property type="evidence" value="ECO:0007669"/>
    <property type="project" value="UniProtKB-UniRule"/>
</dbReference>
<dbReference type="GO" id="GO:0000105">
    <property type="term" value="P:L-histidine biosynthetic process"/>
    <property type="evidence" value="ECO:0007669"/>
    <property type="project" value="UniProtKB-KW"/>
</dbReference>
<dbReference type="GO" id="GO:0009086">
    <property type="term" value="P:methionine biosynthetic process"/>
    <property type="evidence" value="ECO:0007669"/>
    <property type="project" value="UniProtKB-KW"/>
</dbReference>
<dbReference type="GO" id="GO:0006164">
    <property type="term" value="P:purine nucleotide biosynthetic process"/>
    <property type="evidence" value="ECO:0007669"/>
    <property type="project" value="UniProtKB-KW"/>
</dbReference>
<dbReference type="GO" id="GO:0035999">
    <property type="term" value="P:tetrahydrofolate interconversion"/>
    <property type="evidence" value="ECO:0007669"/>
    <property type="project" value="UniProtKB-UniRule"/>
</dbReference>
<dbReference type="CDD" id="cd01080">
    <property type="entry name" value="NAD_bind_m-THF_DH_Cyclohyd"/>
    <property type="match status" value="1"/>
</dbReference>
<dbReference type="FunFam" id="3.40.50.10860:FF:000001">
    <property type="entry name" value="Bifunctional protein FolD"/>
    <property type="match status" value="1"/>
</dbReference>
<dbReference type="FunFam" id="3.40.50.720:FF:000006">
    <property type="entry name" value="Bifunctional protein FolD"/>
    <property type="match status" value="1"/>
</dbReference>
<dbReference type="Gene3D" id="3.40.50.10860">
    <property type="entry name" value="Leucine Dehydrogenase, chain A, domain 1"/>
    <property type="match status" value="1"/>
</dbReference>
<dbReference type="Gene3D" id="3.40.50.720">
    <property type="entry name" value="NAD(P)-binding Rossmann-like Domain"/>
    <property type="match status" value="1"/>
</dbReference>
<dbReference type="HAMAP" id="MF_01576">
    <property type="entry name" value="THF_DHG_CYH"/>
    <property type="match status" value="1"/>
</dbReference>
<dbReference type="InterPro" id="IPR046346">
    <property type="entry name" value="Aminoacid_DH-like_N_sf"/>
</dbReference>
<dbReference type="InterPro" id="IPR036291">
    <property type="entry name" value="NAD(P)-bd_dom_sf"/>
</dbReference>
<dbReference type="InterPro" id="IPR000672">
    <property type="entry name" value="THF_DH/CycHdrlase"/>
</dbReference>
<dbReference type="InterPro" id="IPR020630">
    <property type="entry name" value="THF_DH/CycHdrlase_cat_dom"/>
</dbReference>
<dbReference type="InterPro" id="IPR020867">
    <property type="entry name" value="THF_DH/CycHdrlase_CS"/>
</dbReference>
<dbReference type="InterPro" id="IPR020631">
    <property type="entry name" value="THF_DH/CycHdrlase_NAD-bd_dom"/>
</dbReference>
<dbReference type="NCBIfam" id="NF008058">
    <property type="entry name" value="PRK10792.1"/>
    <property type="match status" value="1"/>
</dbReference>
<dbReference type="NCBIfam" id="NF010783">
    <property type="entry name" value="PRK14186.1"/>
    <property type="match status" value="1"/>
</dbReference>
<dbReference type="PANTHER" id="PTHR48099:SF5">
    <property type="entry name" value="C-1-TETRAHYDROFOLATE SYNTHASE, CYTOPLASMIC"/>
    <property type="match status" value="1"/>
</dbReference>
<dbReference type="PANTHER" id="PTHR48099">
    <property type="entry name" value="C-1-TETRAHYDROFOLATE SYNTHASE, CYTOPLASMIC-RELATED"/>
    <property type="match status" value="1"/>
</dbReference>
<dbReference type="Pfam" id="PF00763">
    <property type="entry name" value="THF_DHG_CYH"/>
    <property type="match status" value="1"/>
</dbReference>
<dbReference type="Pfam" id="PF02882">
    <property type="entry name" value="THF_DHG_CYH_C"/>
    <property type="match status" value="1"/>
</dbReference>
<dbReference type="PRINTS" id="PR00085">
    <property type="entry name" value="THFDHDRGNASE"/>
</dbReference>
<dbReference type="SUPFAM" id="SSF53223">
    <property type="entry name" value="Aminoacid dehydrogenase-like, N-terminal domain"/>
    <property type="match status" value="1"/>
</dbReference>
<dbReference type="SUPFAM" id="SSF51735">
    <property type="entry name" value="NAD(P)-binding Rossmann-fold domains"/>
    <property type="match status" value="1"/>
</dbReference>
<dbReference type="PROSITE" id="PS00766">
    <property type="entry name" value="THF_DHG_CYH_1"/>
    <property type="match status" value="1"/>
</dbReference>
<dbReference type="PROSITE" id="PS00767">
    <property type="entry name" value="THF_DHG_CYH_2"/>
    <property type="match status" value="1"/>
</dbReference>
<keyword id="KW-0028">Amino-acid biosynthesis</keyword>
<keyword id="KW-0368">Histidine biosynthesis</keyword>
<keyword id="KW-0378">Hydrolase</keyword>
<keyword id="KW-0486">Methionine biosynthesis</keyword>
<keyword id="KW-0511">Multifunctional enzyme</keyword>
<keyword id="KW-0521">NADP</keyword>
<keyword id="KW-0554">One-carbon metabolism</keyword>
<keyword id="KW-0560">Oxidoreductase</keyword>
<keyword id="KW-0658">Purine biosynthesis</keyword>